<comment type="function">
    <text evidence="5">Probable tRNA acetyltransferase required for the formation of the modified nucleoside N(4)-acetylcytidine in serine and leucine tRNAs. Binds RNA.</text>
</comment>
<comment type="subcellular location">
    <subcellularLocation>
        <location evidence="3">Cytoplasm</location>
    </subcellularLocation>
    <subcellularLocation>
        <location evidence="3">Nucleus</location>
    </subcellularLocation>
</comment>
<comment type="miscellaneous">
    <text evidence="4">Present with 2630 molecules/cell in log phase SD medium.</text>
</comment>
<dbReference type="EC" id="2.3.-.-"/>
<dbReference type="EMBL" id="Z72754">
    <property type="protein sequence ID" value="CAA96950.1"/>
    <property type="molecule type" value="Genomic_DNA"/>
</dbReference>
<dbReference type="EMBL" id="BK006941">
    <property type="protein sequence ID" value="DAA07886.1"/>
    <property type="molecule type" value="Genomic_DNA"/>
</dbReference>
<dbReference type="PIR" id="S64254">
    <property type="entry name" value="S64254"/>
</dbReference>
<dbReference type="RefSeq" id="NP_011282.1">
    <property type="nucleotide sequence ID" value="NM_001181098.1"/>
</dbReference>
<dbReference type="SMR" id="P53072"/>
<dbReference type="BioGRID" id="33007">
    <property type="interactions" value="101"/>
</dbReference>
<dbReference type="FunCoup" id="P53072">
    <property type="interactions" value="1000"/>
</dbReference>
<dbReference type="IntAct" id="P53072">
    <property type="interactions" value="3"/>
</dbReference>
<dbReference type="MINT" id="P53072"/>
<dbReference type="STRING" id="4932.YGL232W"/>
<dbReference type="iPTMnet" id="P53072"/>
<dbReference type="PaxDb" id="4932-YGL232W"/>
<dbReference type="PeptideAtlas" id="P53072"/>
<dbReference type="EnsemblFungi" id="YGL232W_mRNA">
    <property type="protein sequence ID" value="YGL232W"/>
    <property type="gene ID" value="YGL232W"/>
</dbReference>
<dbReference type="GeneID" id="852619"/>
<dbReference type="KEGG" id="sce:YGL232W"/>
<dbReference type="AGR" id="SGD:S000003201"/>
<dbReference type="SGD" id="S000003201">
    <property type="gene designation" value="TAN1"/>
</dbReference>
<dbReference type="VEuPathDB" id="FungiDB:YGL232W"/>
<dbReference type="eggNOG" id="KOG3943">
    <property type="taxonomic scope" value="Eukaryota"/>
</dbReference>
<dbReference type="GeneTree" id="ENSGT00390000002365"/>
<dbReference type="HOGENOM" id="CLU_039352_2_2_1"/>
<dbReference type="InParanoid" id="P53072"/>
<dbReference type="OMA" id="MNEKACV"/>
<dbReference type="OrthoDB" id="367221at2759"/>
<dbReference type="BioCyc" id="YEAST:G3O-30706-MONOMER"/>
<dbReference type="BioGRID-ORCS" id="852619">
    <property type="hits" value="0 hits in 10 CRISPR screens"/>
</dbReference>
<dbReference type="PRO" id="PR:P53072"/>
<dbReference type="Proteomes" id="UP000002311">
    <property type="component" value="Chromosome VII"/>
</dbReference>
<dbReference type="RNAct" id="P53072">
    <property type="molecule type" value="protein"/>
</dbReference>
<dbReference type="GO" id="GO:0005737">
    <property type="term" value="C:cytoplasm"/>
    <property type="evidence" value="ECO:0007005"/>
    <property type="project" value="SGD"/>
</dbReference>
<dbReference type="GO" id="GO:0005634">
    <property type="term" value="C:nucleus"/>
    <property type="evidence" value="ECO:0007005"/>
    <property type="project" value="SGD"/>
</dbReference>
<dbReference type="GO" id="GO:0016746">
    <property type="term" value="F:acyltransferase activity"/>
    <property type="evidence" value="ECO:0007669"/>
    <property type="project" value="UniProtKB-KW"/>
</dbReference>
<dbReference type="GO" id="GO:0003723">
    <property type="term" value="F:RNA binding"/>
    <property type="evidence" value="ECO:0000314"/>
    <property type="project" value="SGD"/>
</dbReference>
<dbReference type="GO" id="GO:0006400">
    <property type="term" value="P:tRNA modification"/>
    <property type="evidence" value="ECO:0000315"/>
    <property type="project" value="SGD"/>
</dbReference>
<dbReference type="CDD" id="cd11717">
    <property type="entry name" value="THUMP_THUMPD1_like"/>
    <property type="match status" value="1"/>
</dbReference>
<dbReference type="FunFam" id="3.30.2300.10:FF:000001">
    <property type="entry name" value="THUMP domain-containing protein 1"/>
    <property type="match status" value="1"/>
</dbReference>
<dbReference type="Gene3D" id="3.30.2300.10">
    <property type="entry name" value="THUMP superfamily"/>
    <property type="match status" value="1"/>
</dbReference>
<dbReference type="InterPro" id="IPR004114">
    <property type="entry name" value="THUMP_dom"/>
</dbReference>
<dbReference type="InterPro" id="IPR040183">
    <property type="entry name" value="THUMPD1-like"/>
</dbReference>
<dbReference type="PANTHER" id="PTHR13452">
    <property type="entry name" value="THUMP DOMAIN CONTAINING PROTEIN 1-RELATED"/>
    <property type="match status" value="1"/>
</dbReference>
<dbReference type="PANTHER" id="PTHR13452:SF10">
    <property type="entry name" value="THUMP DOMAIN-CONTAINING PROTEIN 1"/>
    <property type="match status" value="1"/>
</dbReference>
<dbReference type="Pfam" id="PF02926">
    <property type="entry name" value="THUMP"/>
    <property type="match status" value="1"/>
</dbReference>
<dbReference type="SMART" id="SM00981">
    <property type="entry name" value="THUMP"/>
    <property type="match status" value="1"/>
</dbReference>
<dbReference type="SUPFAM" id="SSF143437">
    <property type="entry name" value="THUMP domain-like"/>
    <property type="match status" value="1"/>
</dbReference>
<dbReference type="PROSITE" id="PS51165">
    <property type="entry name" value="THUMP"/>
    <property type="match status" value="1"/>
</dbReference>
<reference key="1">
    <citation type="journal article" date="1997" name="Nature">
        <title>The nucleotide sequence of Saccharomyces cerevisiae chromosome VII.</title>
        <authorList>
            <person name="Tettelin H."/>
            <person name="Agostoni-Carbone M.L."/>
            <person name="Albermann K."/>
            <person name="Albers M."/>
            <person name="Arroyo J."/>
            <person name="Backes U."/>
            <person name="Barreiros T."/>
            <person name="Bertani I."/>
            <person name="Bjourson A.J."/>
            <person name="Brueckner M."/>
            <person name="Bruschi C.V."/>
            <person name="Carignani G."/>
            <person name="Castagnoli L."/>
            <person name="Cerdan E."/>
            <person name="Clemente M.L."/>
            <person name="Coblenz A."/>
            <person name="Coglievina M."/>
            <person name="Coissac E."/>
            <person name="Defoor E."/>
            <person name="Del Bino S."/>
            <person name="Delius H."/>
            <person name="Delneri D."/>
            <person name="de Wergifosse P."/>
            <person name="Dujon B."/>
            <person name="Durand P."/>
            <person name="Entian K.-D."/>
            <person name="Eraso P."/>
            <person name="Escribano V."/>
            <person name="Fabiani L."/>
            <person name="Fartmann B."/>
            <person name="Feroli F."/>
            <person name="Feuermann M."/>
            <person name="Frontali L."/>
            <person name="Garcia-Gonzalez M."/>
            <person name="Garcia-Saez M.I."/>
            <person name="Goffeau A."/>
            <person name="Guerreiro P."/>
            <person name="Hani J."/>
            <person name="Hansen M."/>
            <person name="Hebling U."/>
            <person name="Hernandez K."/>
            <person name="Heumann K."/>
            <person name="Hilger F."/>
            <person name="Hofmann B."/>
            <person name="Indge K.J."/>
            <person name="James C.M."/>
            <person name="Klima R."/>
            <person name="Koetter P."/>
            <person name="Kramer B."/>
            <person name="Kramer W."/>
            <person name="Lauquin G."/>
            <person name="Leuther H."/>
            <person name="Louis E.J."/>
            <person name="Maillier E."/>
            <person name="Marconi A."/>
            <person name="Martegani E."/>
            <person name="Mazon M.J."/>
            <person name="Mazzoni C."/>
            <person name="McReynolds A.D.K."/>
            <person name="Melchioretto P."/>
            <person name="Mewes H.-W."/>
            <person name="Minenkova O."/>
            <person name="Mueller-Auer S."/>
            <person name="Nawrocki A."/>
            <person name="Netter P."/>
            <person name="Neu R."/>
            <person name="Nombela C."/>
            <person name="Oliver S.G."/>
            <person name="Panzeri L."/>
            <person name="Paoluzi S."/>
            <person name="Plevani P."/>
            <person name="Portetelle D."/>
            <person name="Portillo F."/>
            <person name="Potier S."/>
            <person name="Purnelle B."/>
            <person name="Rieger M."/>
            <person name="Riles L."/>
            <person name="Rinaldi T."/>
            <person name="Robben J."/>
            <person name="Rodrigues-Pousada C."/>
            <person name="Rodriguez-Belmonte E."/>
            <person name="Rodriguez-Torres A.M."/>
            <person name="Rose M."/>
            <person name="Ruzzi M."/>
            <person name="Saliola M."/>
            <person name="Sanchez-Perez M."/>
            <person name="Schaefer B."/>
            <person name="Schaefer M."/>
            <person name="Scharfe M."/>
            <person name="Schmidheini T."/>
            <person name="Schreer A."/>
            <person name="Skala J."/>
            <person name="Souciet J.-L."/>
            <person name="Steensma H.Y."/>
            <person name="Talla E."/>
            <person name="Thierry A."/>
            <person name="Vandenbol M."/>
            <person name="van der Aart Q.J.M."/>
            <person name="Van Dyck L."/>
            <person name="Vanoni M."/>
            <person name="Verhasselt P."/>
            <person name="Voet M."/>
            <person name="Volckaert G."/>
            <person name="Wambutt R."/>
            <person name="Watson M.D."/>
            <person name="Weber N."/>
            <person name="Wedler E."/>
            <person name="Wedler H."/>
            <person name="Wipfli P."/>
            <person name="Wolf K."/>
            <person name="Wright L.F."/>
            <person name="Zaccaria P."/>
            <person name="Zimmermann M."/>
            <person name="Zollner A."/>
            <person name="Kleine K."/>
        </authorList>
    </citation>
    <scope>NUCLEOTIDE SEQUENCE [LARGE SCALE GENOMIC DNA]</scope>
    <source>
        <strain>ATCC 204508 / S288c</strain>
    </source>
</reference>
<reference key="2">
    <citation type="journal article" date="2014" name="G3 (Bethesda)">
        <title>The reference genome sequence of Saccharomyces cerevisiae: Then and now.</title>
        <authorList>
            <person name="Engel S.R."/>
            <person name="Dietrich F.S."/>
            <person name="Fisk D.G."/>
            <person name="Binkley G."/>
            <person name="Balakrishnan R."/>
            <person name="Costanzo M.C."/>
            <person name="Dwight S.S."/>
            <person name="Hitz B.C."/>
            <person name="Karra K."/>
            <person name="Nash R.S."/>
            <person name="Weng S."/>
            <person name="Wong E.D."/>
            <person name="Lloyd P."/>
            <person name="Skrzypek M.S."/>
            <person name="Miyasato S.R."/>
            <person name="Simison M."/>
            <person name="Cherry J.M."/>
        </authorList>
    </citation>
    <scope>GENOME REANNOTATION</scope>
    <source>
        <strain>ATCC 204508 / S288c</strain>
    </source>
</reference>
<reference key="3">
    <citation type="journal article" date="2004" name="RNA">
        <title>The Saccharomyces cerevisiae TAN1 gene is required for N4-acetylcytidine formation in tRNA.</title>
        <authorList>
            <person name="Johansson M.J."/>
            <person name="Bystroem A.S."/>
        </authorList>
    </citation>
    <scope>FUNCTION</scope>
</reference>
<reference key="4">
    <citation type="journal article" date="2003" name="Nature">
        <title>Global analysis of protein localization in budding yeast.</title>
        <authorList>
            <person name="Huh W.-K."/>
            <person name="Falvo J.V."/>
            <person name="Gerke L.C."/>
            <person name="Carroll A.S."/>
            <person name="Howson R.W."/>
            <person name="Weissman J.S."/>
            <person name="O'Shea E.K."/>
        </authorList>
    </citation>
    <scope>SUBCELLULAR LOCATION [LARGE SCALE ANALYSIS]</scope>
</reference>
<reference key="5">
    <citation type="journal article" date="2003" name="Nature">
        <title>Global analysis of protein expression in yeast.</title>
        <authorList>
            <person name="Ghaemmaghami S."/>
            <person name="Huh W.-K."/>
            <person name="Bower K."/>
            <person name="Howson R.W."/>
            <person name="Belle A."/>
            <person name="Dephoure N."/>
            <person name="O'Shea E.K."/>
            <person name="Weissman J.S."/>
        </authorList>
    </citation>
    <scope>LEVEL OF PROTEIN EXPRESSION [LARGE SCALE ANALYSIS]</scope>
</reference>
<reference key="6">
    <citation type="journal article" date="2007" name="J. Proteome Res.">
        <title>Large-scale phosphorylation analysis of alpha-factor-arrested Saccharomyces cerevisiae.</title>
        <authorList>
            <person name="Li X."/>
            <person name="Gerber S.A."/>
            <person name="Rudner A.D."/>
            <person name="Beausoleil S.A."/>
            <person name="Haas W."/>
            <person name="Villen J."/>
            <person name="Elias J.E."/>
            <person name="Gygi S.P."/>
        </authorList>
    </citation>
    <scope>PHOSPHORYLATION [LARGE SCALE ANALYSIS] AT SER-72</scope>
    <scope>IDENTIFICATION BY MASS SPECTROMETRY [LARGE SCALE ANALYSIS]</scope>
    <source>
        <strain>ADR376</strain>
    </source>
</reference>
<reference key="7">
    <citation type="journal article" date="2008" name="Mol. Cell. Proteomics">
        <title>A multidimensional chromatography technology for in-depth phosphoproteome analysis.</title>
        <authorList>
            <person name="Albuquerque C.P."/>
            <person name="Smolka M.B."/>
            <person name="Payne S.H."/>
            <person name="Bafna V."/>
            <person name="Eng J."/>
            <person name="Zhou H."/>
        </authorList>
    </citation>
    <scope>PHOSPHORYLATION [LARGE SCALE ANALYSIS] AT SER-72</scope>
    <scope>IDENTIFICATION BY MASS SPECTROMETRY [LARGE SCALE ANALYSIS]</scope>
</reference>
<reference key="8">
    <citation type="journal article" date="2009" name="Science">
        <title>Global analysis of Cdk1 substrate phosphorylation sites provides insights into evolution.</title>
        <authorList>
            <person name="Holt L.J."/>
            <person name="Tuch B.B."/>
            <person name="Villen J."/>
            <person name="Johnson A.D."/>
            <person name="Gygi S.P."/>
            <person name="Morgan D.O."/>
        </authorList>
    </citation>
    <scope>PHOSPHORYLATION [LARGE SCALE ANALYSIS] AT SER-72</scope>
    <scope>IDENTIFICATION BY MASS SPECTROMETRY [LARGE SCALE ANALYSIS]</scope>
</reference>
<keyword id="KW-0012">Acyltransferase</keyword>
<keyword id="KW-0963">Cytoplasm</keyword>
<keyword id="KW-0539">Nucleus</keyword>
<keyword id="KW-0597">Phosphoprotein</keyword>
<keyword id="KW-1185">Reference proteome</keyword>
<keyword id="KW-0694">RNA-binding</keyword>
<keyword id="KW-0808">Transferase</keyword>
<keyword id="KW-0819">tRNA processing</keyword>
<name>TAN1_YEAST</name>
<gene>
    <name type="primary">TAN1</name>
    <name type="ordered locus">YGL232W</name>
</gene>
<organism>
    <name type="scientific">Saccharomyces cerevisiae (strain ATCC 204508 / S288c)</name>
    <name type="common">Baker's yeast</name>
    <dbReference type="NCBI Taxonomy" id="559292"/>
    <lineage>
        <taxon>Eukaryota</taxon>
        <taxon>Fungi</taxon>
        <taxon>Dikarya</taxon>
        <taxon>Ascomycota</taxon>
        <taxon>Saccharomycotina</taxon>
        <taxon>Saccharomycetes</taxon>
        <taxon>Saccharomycetales</taxon>
        <taxon>Saccharomycetaceae</taxon>
        <taxon>Saccharomyces</taxon>
    </lineage>
</organism>
<protein>
    <recommendedName>
        <fullName>tRNA acetyltransferase TAN1</fullName>
        <ecNumber>2.3.-.-</ecNumber>
    </recommendedName>
</protein>
<proteinExistence type="evidence at protein level"/>
<evidence type="ECO:0000255" key="1">
    <source>
        <dbReference type="PROSITE-ProRule" id="PRU00529"/>
    </source>
</evidence>
<evidence type="ECO:0000256" key="2">
    <source>
        <dbReference type="SAM" id="MobiDB-lite"/>
    </source>
</evidence>
<evidence type="ECO:0000269" key="3">
    <source>
    </source>
</evidence>
<evidence type="ECO:0000269" key="4">
    <source>
    </source>
</evidence>
<evidence type="ECO:0000269" key="5">
    <source>
    </source>
</evidence>
<evidence type="ECO:0007744" key="6">
    <source>
    </source>
</evidence>
<evidence type="ECO:0007744" key="7">
    <source>
    </source>
</evidence>
<evidence type="ECO:0007744" key="8">
    <source>
    </source>
</evidence>
<feature type="chain" id="PRO_0000072426" description="tRNA acetyltransferase TAN1">
    <location>
        <begin position="1"/>
        <end position="289"/>
    </location>
</feature>
<feature type="domain" description="THUMP" evidence="1">
    <location>
        <begin position="146"/>
        <end position="259"/>
    </location>
</feature>
<feature type="region of interest" description="Disordered" evidence="2">
    <location>
        <begin position="1"/>
        <end position="31"/>
    </location>
</feature>
<feature type="region of interest" description="Disordered" evidence="2">
    <location>
        <begin position="64"/>
        <end position="83"/>
    </location>
</feature>
<feature type="compositionally biased region" description="Basic and acidic residues" evidence="2">
    <location>
        <begin position="1"/>
        <end position="10"/>
    </location>
</feature>
<feature type="modified residue" description="Phosphoserine" evidence="6 7 8">
    <location>
        <position position="72"/>
    </location>
</feature>
<sequence length="289" mass="33550">MGEKRNRNGKDANSQNRKKFKVSSGFLDPGTSGIYATCSRRHERQAAQELQLLFEEKFQELYGDIKEGEDESENDEKKDLSIEDQIKKELQELKGEETGKDLSSGETKKKDPLAFIDLNCECVTFCKTRKPIVPEEFVLSIMKDLADPKNMVKRTRYVQKLTPITYSCNAKMEQLIKLANLVIGPHFHDPSNVKKNYKFAVEVTRRNFNTIERMDIINQVVKLVNKEGSEFNHTVDLKNYDKLILVECFKSNIGMCVVDGDYKTKYRKYNVQQLYESKFRKDEDKSVKQ</sequence>
<accession>P53072</accession>
<accession>D6VVA2</accession>